<comment type="function">
    <text evidence="1">Glycosyltransferase involved in the biosynthesis of kanamycin by mediating conversion of 2-deoxystreptamine (2-DOS) to 2'-N-acetylparomamine using UDP-alpha-D-glucose as sugar donor. Can also accept UDP-alpha-D-glucosamine, but with a much lower activity compared to UDP-alpha-D-glucose.</text>
</comment>
<comment type="catalytic activity">
    <reaction evidence="1">
        <text>2-deoxystreptamine + UDP-N-acetyl-alpha-D-glucosamine = 2'-N-acetylparomamine + UDP + H(+)</text>
        <dbReference type="Rhea" id="RHEA:33947"/>
        <dbReference type="ChEBI" id="CHEBI:15378"/>
        <dbReference type="ChEBI" id="CHEBI:57705"/>
        <dbReference type="ChEBI" id="CHEBI:58223"/>
        <dbReference type="ChEBI" id="CHEBI:65010"/>
        <dbReference type="ChEBI" id="CHEBI:65069"/>
        <dbReference type="EC" id="2.4.1.283"/>
    </reaction>
</comment>
<comment type="catalytic activity">
    <reaction evidence="1">
        <text>2-deoxystreptamine + UDP-alpha-D-glucose = 2'-deamino-2'-hydroxyparomamine + UDP + H(+)</text>
        <dbReference type="Rhea" id="RHEA:34063"/>
        <dbReference type="ChEBI" id="CHEBI:15378"/>
        <dbReference type="ChEBI" id="CHEBI:58223"/>
        <dbReference type="ChEBI" id="CHEBI:58885"/>
        <dbReference type="ChEBI" id="CHEBI:65069"/>
        <dbReference type="ChEBI" id="CHEBI:65071"/>
        <dbReference type="EC" id="2.4.1.284"/>
    </reaction>
</comment>
<comment type="biophysicochemical properties">
    <kinetics>
        <KM evidence="1">0.32 mM for UDP-N-acetyl-alpha-D-glucosamine</KM>
        <KM evidence="1">0.28 mM for UDP-alpha-D-glucose</KM>
    </kinetics>
</comment>
<comment type="pathway">
    <text evidence="1">Antibiotic biosynthesis; kanamycin biosynthesis.</text>
</comment>
<comment type="similarity">
    <text evidence="2">Belongs to the glycosyltransferase group 1 family.</text>
</comment>
<protein>
    <recommendedName>
        <fullName>2-deoxystreptamine glucosyltransferase</fullName>
        <ecNumber>2.4.1.284</ecNumber>
    </recommendedName>
    <alternativeName>
        <fullName>2-deoxystreptamine N-acetyl-D-glucosaminyltransferase</fullName>
        <ecNumber>2.4.1.283</ecNumber>
    </alternativeName>
    <alternativeName>
        <fullName>Kanamycin biosynthesis protein F</fullName>
    </alternativeName>
</protein>
<sequence length="387" mass="41613">MQVQILRMSRALAELGVRQQVLTVGFPGLPRVRRDSENLVVRITRAPLPRLRSRITGLVGLNQAWLAAALTECVKLRRRWPADLIQVHLDGQLWALLAGPVAARLVGVPYTVTVHCSRLAVYQPMSTVDRIQHPLVTAVERWALRRAAGITTLTERTATVLAAELGAAQRVIDVVPDAVDPDRAEAAPAEVERLKKRFGLPQEGGPVIGFVGRIAHEKGWRHAVQAVAELADAGRDFTFLVVGDGPQRADMEAAVAEAGLTDRFVFTGFLPNDEIPAVMTALDVLLMPSVHEELGGSAVEAMLAGTPVAAYGVGGLCDTVGKVTPSLLAAPGQVAELARTVKRVLDDPAPVLAELRAGREWLADEFGVHHAAGLALAHYERVLGKER</sequence>
<evidence type="ECO:0000269" key="1">
    <source>
    </source>
</evidence>
<evidence type="ECO:0000305" key="2"/>
<proteinExistence type="evidence at protein level"/>
<reference key="1">
    <citation type="journal article" date="2004" name="Arch. Biochem. Biophys.">
        <title>A gene cluster for biosynthesis of kanamycin from Streptomyces kanamyceticus: comparison with gentamicin biosynthetic gene cluster.</title>
        <authorList>
            <person name="Kharel M.K."/>
            <person name="Subba B."/>
            <person name="Basnet D.B."/>
            <person name="Woo J.S."/>
            <person name="Lee H.C."/>
            <person name="Liou K."/>
            <person name="Sohng J.K."/>
        </authorList>
    </citation>
    <scope>NUCLEOTIDE SEQUENCE [GENOMIC DNA]</scope>
    <source>
        <strain>ATCC 12853 / DSM 40500 / NBRC 13414 / NCIMB 9343 / NRRL B-2535 / VKM Ac-837</strain>
    </source>
</reference>
<reference key="2">
    <citation type="journal article" date="2011" name="Nat. Chem. Biol.">
        <title>Discovery of parallel pathways of kanamycin biosynthesis allows antibiotic manipulation.</title>
        <authorList>
            <person name="Park J.W."/>
            <person name="Park S.R."/>
            <person name="Nepal K.K."/>
            <person name="Han A.R."/>
            <person name="Ban Y.H."/>
            <person name="Yoo Y.J."/>
            <person name="Kim E.J."/>
            <person name="Kim E.M."/>
            <person name="Kim D."/>
            <person name="Sohng J.K."/>
            <person name="Yoon Y.J."/>
        </authorList>
    </citation>
    <scope>FUNCTION</scope>
    <scope>CATALYTIC ACTIVITY</scope>
    <scope>PATHWAY</scope>
    <scope>BIOPHYSICOCHEMICAL PROPERTIES</scope>
    <source>
        <strain>ATCC 12853 / DSM 40500 / NBRC 13414 / NCIMB 9343 / NRRL B-2535 / VKM Ac-837</strain>
    </source>
</reference>
<organism>
    <name type="scientific">Streptomyces kanamyceticus</name>
    <dbReference type="NCBI Taxonomy" id="1967"/>
    <lineage>
        <taxon>Bacteria</taxon>
        <taxon>Bacillati</taxon>
        <taxon>Actinomycetota</taxon>
        <taxon>Actinomycetes</taxon>
        <taxon>Kitasatosporales</taxon>
        <taxon>Streptomycetaceae</taxon>
        <taxon>Streptomyces</taxon>
    </lineage>
</organism>
<accession>Q65CC1</accession>
<name>KANF_STRKN</name>
<gene>
    <name type="primary">kanF</name>
</gene>
<dbReference type="EC" id="2.4.1.284"/>
<dbReference type="EC" id="2.4.1.283"/>
<dbReference type="EMBL" id="AJ582817">
    <property type="protein sequence ID" value="CAE46947.1"/>
    <property type="molecule type" value="Genomic_DNA"/>
</dbReference>
<dbReference type="SMR" id="Q65CC1"/>
<dbReference type="KEGG" id="ag:CAE46947"/>
<dbReference type="BioCyc" id="MetaCyc:MONOMER-17218"/>
<dbReference type="SABIO-RK" id="Q65CC1"/>
<dbReference type="UniPathway" id="UPA00965"/>
<dbReference type="GO" id="GO:0102318">
    <property type="term" value="F:2-deoxystreptamine glucosyltransferase activity"/>
    <property type="evidence" value="ECO:0007669"/>
    <property type="project" value="UniProtKB-EC"/>
</dbReference>
<dbReference type="GO" id="GO:0102319">
    <property type="term" value="F:2-deoxystreptamine N-acetyl-D-glucosaminyltransferase activity"/>
    <property type="evidence" value="ECO:0007669"/>
    <property type="project" value="UniProtKB-EC"/>
</dbReference>
<dbReference type="GO" id="GO:0016758">
    <property type="term" value="F:hexosyltransferase activity"/>
    <property type="evidence" value="ECO:0000314"/>
    <property type="project" value="UniProtKB"/>
</dbReference>
<dbReference type="GO" id="GO:1901133">
    <property type="term" value="P:kanamycin biosynthetic process"/>
    <property type="evidence" value="ECO:0000314"/>
    <property type="project" value="UniProtKB"/>
</dbReference>
<dbReference type="CDD" id="cd03819">
    <property type="entry name" value="GT4_WavL-like"/>
    <property type="match status" value="1"/>
</dbReference>
<dbReference type="FunFam" id="3.40.50.2000:FF:000392">
    <property type="entry name" value="2-deoxystreptamine N-acetyl-D-glucosaminyltransferase"/>
    <property type="match status" value="1"/>
</dbReference>
<dbReference type="Gene3D" id="3.40.50.2000">
    <property type="entry name" value="Glycogen Phosphorylase B"/>
    <property type="match status" value="2"/>
</dbReference>
<dbReference type="InterPro" id="IPR001296">
    <property type="entry name" value="Glyco_trans_1"/>
</dbReference>
<dbReference type="InterPro" id="IPR028098">
    <property type="entry name" value="Glyco_trans_4-like_N"/>
</dbReference>
<dbReference type="InterPro" id="IPR050194">
    <property type="entry name" value="Glycosyltransferase_grp1"/>
</dbReference>
<dbReference type="PANTHER" id="PTHR45947">
    <property type="entry name" value="SULFOQUINOVOSYL TRANSFERASE SQD2"/>
    <property type="match status" value="1"/>
</dbReference>
<dbReference type="PANTHER" id="PTHR45947:SF3">
    <property type="entry name" value="SULFOQUINOVOSYL TRANSFERASE SQD2"/>
    <property type="match status" value="1"/>
</dbReference>
<dbReference type="Pfam" id="PF13579">
    <property type="entry name" value="Glyco_trans_4_4"/>
    <property type="match status" value="1"/>
</dbReference>
<dbReference type="Pfam" id="PF00534">
    <property type="entry name" value="Glycos_transf_1"/>
    <property type="match status" value="1"/>
</dbReference>
<dbReference type="SUPFAM" id="SSF53756">
    <property type="entry name" value="UDP-Glycosyltransferase/glycogen phosphorylase"/>
    <property type="match status" value="1"/>
</dbReference>
<feature type="chain" id="PRO_0000421740" description="2-deoxystreptamine glucosyltransferase">
    <location>
        <begin position="1"/>
        <end position="387"/>
    </location>
</feature>
<keyword id="KW-0045">Antibiotic biosynthesis</keyword>
<keyword id="KW-0328">Glycosyltransferase</keyword>
<keyword id="KW-0808">Transferase</keyword>